<comment type="function">
    <text evidence="1">Involved in peptide bond synthesis. Stimulates efficient translation and peptide-bond synthesis on native or reconstituted 70S ribosomes in vitro. Probably functions indirectly by altering the affinity of the ribosome for aminoacyl-tRNA, thus increasing their reactivity as acceptors for peptidyl transferase.</text>
</comment>
<comment type="pathway">
    <text evidence="1">Protein biosynthesis; polypeptide chain elongation.</text>
</comment>
<comment type="subcellular location">
    <subcellularLocation>
        <location evidence="1">Cytoplasm</location>
    </subcellularLocation>
</comment>
<comment type="similarity">
    <text evidence="1">Belongs to the elongation factor P family.</text>
</comment>
<proteinExistence type="inferred from homology"/>
<feature type="chain" id="PRO_1000096182" description="Elongation factor P">
    <location>
        <begin position="1"/>
        <end position="185"/>
    </location>
</feature>
<accession>B2J711</accession>
<dbReference type="EMBL" id="CP001037">
    <property type="protein sequence ID" value="ACC79219.1"/>
    <property type="molecule type" value="Genomic_DNA"/>
</dbReference>
<dbReference type="RefSeq" id="WP_012407245.1">
    <property type="nucleotide sequence ID" value="NC_010628.1"/>
</dbReference>
<dbReference type="SMR" id="B2J711"/>
<dbReference type="STRING" id="63737.Npun_R0440"/>
<dbReference type="EnsemblBacteria" id="ACC79219">
    <property type="protein sequence ID" value="ACC79219"/>
    <property type="gene ID" value="Npun_R0440"/>
</dbReference>
<dbReference type="KEGG" id="npu:Npun_R0440"/>
<dbReference type="eggNOG" id="COG0231">
    <property type="taxonomic scope" value="Bacteria"/>
</dbReference>
<dbReference type="HOGENOM" id="CLU_074944_0_1_3"/>
<dbReference type="OrthoDB" id="9801844at2"/>
<dbReference type="PhylomeDB" id="B2J711"/>
<dbReference type="UniPathway" id="UPA00345"/>
<dbReference type="Proteomes" id="UP000001191">
    <property type="component" value="Chromosome"/>
</dbReference>
<dbReference type="GO" id="GO:0005737">
    <property type="term" value="C:cytoplasm"/>
    <property type="evidence" value="ECO:0007669"/>
    <property type="project" value="UniProtKB-SubCell"/>
</dbReference>
<dbReference type="GO" id="GO:0003746">
    <property type="term" value="F:translation elongation factor activity"/>
    <property type="evidence" value="ECO:0007669"/>
    <property type="project" value="UniProtKB-UniRule"/>
</dbReference>
<dbReference type="GO" id="GO:0043043">
    <property type="term" value="P:peptide biosynthetic process"/>
    <property type="evidence" value="ECO:0007669"/>
    <property type="project" value="InterPro"/>
</dbReference>
<dbReference type="CDD" id="cd04470">
    <property type="entry name" value="S1_EF-P_repeat_1"/>
    <property type="match status" value="1"/>
</dbReference>
<dbReference type="CDD" id="cd05794">
    <property type="entry name" value="S1_EF-P_repeat_2"/>
    <property type="match status" value="1"/>
</dbReference>
<dbReference type="FunFam" id="2.30.30.30:FF:000003">
    <property type="entry name" value="Elongation factor P"/>
    <property type="match status" value="1"/>
</dbReference>
<dbReference type="FunFam" id="2.40.50.140:FF:000004">
    <property type="entry name" value="Elongation factor P"/>
    <property type="match status" value="1"/>
</dbReference>
<dbReference type="FunFam" id="2.40.50.140:FF:000009">
    <property type="entry name" value="Elongation factor P"/>
    <property type="match status" value="1"/>
</dbReference>
<dbReference type="Gene3D" id="2.30.30.30">
    <property type="match status" value="1"/>
</dbReference>
<dbReference type="Gene3D" id="2.40.50.140">
    <property type="entry name" value="Nucleic acid-binding proteins"/>
    <property type="match status" value="2"/>
</dbReference>
<dbReference type="HAMAP" id="MF_00141">
    <property type="entry name" value="EF_P"/>
    <property type="match status" value="1"/>
</dbReference>
<dbReference type="InterPro" id="IPR015365">
    <property type="entry name" value="Elong-fact-P_C"/>
</dbReference>
<dbReference type="InterPro" id="IPR012340">
    <property type="entry name" value="NA-bd_OB-fold"/>
</dbReference>
<dbReference type="InterPro" id="IPR014722">
    <property type="entry name" value="Rib_uL2_dom2"/>
</dbReference>
<dbReference type="InterPro" id="IPR020599">
    <property type="entry name" value="Transl_elong_fac_P/YeiP"/>
</dbReference>
<dbReference type="InterPro" id="IPR013185">
    <property type="entry name" value="Transl_elong_KOW-like"/>
</dbReference>
<dbReference type="InterPro" id="IPR001059">
    <property type="entry name" value="Transl_elong_P/YeiP_cen"/>
</dbReference>
<dbReference type="InterPro" id="IPR013852">
    <property type="entry name" value="Transl_elong_P/YeiP_CS"/>
</dbReference>
<dbReference type="InterPro" id="IPR011768">
    <property type="entry name" value="Transl_elongation_fac_P"/>
</dbReference>
<dbReference type="InterPro" id="IPR008991">
    <property type="entry name" value="Translation_prot_SH3-like_sf"/>
</dbReference>
<dbReference type="NCBIfam" id="TIGR00038">
    <property type="entry name" value="efp"/>
    <property type="match status" value="1"/>
</dbReference>
<dbReference type="NCBIfam" id="NF001810">
    <property type="entry name" value="PRK00529.1"/>
    <property type="match status" value="1"/>
</dbReference>
<dbReference type="PANTHER" id="PTHR30053">
    <property type="entry name" value="ELONGATION FACTOR P"/>
    <property type="match status" value="1"/>
</dbReference>
<dbReference type="PANTHER" id="PTHR30053:SF12">
    <property type="entry name" value="ELONGATION FACTOR P (EF-P) FAMILY PROTEIN"/>
    <property type="match status" value="1"/>
</dbReference>
<dbReference type="Pfam" id="PF01132">
    <property type="entry name" value="EFP"/>
    <property type="match status" value="1"/>
</dbReference>
<dbReference type="Pfam" id="PF08207">
    <property type="entry name" value="EFP_N"/>
    <property type="match status" value="1"/>
</dbReference>
<dbReference type="Pfam" id="PF09285">
    <property type="entry name" value="Elong-fact-P_C"/>
    <property type="match status" value="1"/>
</dbReference>
<dbReference type="PIRSF" id="PIRSF005901">
    <property type="entry name" value="EF-P"/>
    <property type="match status" value="1"/>
</dbReference>
<dbReference type="SMART" id="SM01185">
    <property type="entry name" value="EFP"/>
    <property type="match status" value="1"/>
</dbReference>
<dbReference type="SMART" id="SM00841">
    <property type="entry name" value="Elong-fact-P_C"/>
    <property type="match status" value="1"/>
</dbReference>
<dbReference type="SUPFAM" id="SSF50249">
    <property type="entry name" value="Nucleic acid-binding proteins"/>
    <property type="match status" value="2"/>
</dbReference>
<dbReference type="SUPFAM" id="SSF50104">
    <property type="entry name" value="Translation proteins SH3-like domain"/>
    <property type="match status" value="1"/>
</dbReference>
<dbReference type="PROSITE" id="PS01275">
    <property type="entry name" value="EFP"/>
    <property type="match status" value="1"/>
</dbReference>
<reference key="1">
    <citation type="journal article" date="2013" name="Plant Physiol.">
        <title>A Nostoc punctiforme Sugar Transporter Necessary to Establish a Cyanobacterium-Plant Symbiosis.</title>
        <authorList>
            <person name="Ekman M."/>
            <person name="Picossi S."/>
            <person name="Campbell E.L."/>
            <person name="Meeks J.C."/>
            <person name="Flores E."/>
        </authorList>
    </citation>
    <scope>NUCLEOTIDE SEQUENCE [LARGE SCALE GENOMIC DNA]</scope>
    <source>
        <strain>ATCC 29133 / PCC 73102</strain>
    </source>
</reference>
<protein>
    <recommendedName>
        <fullName evidence="1">Elongation factor P</fullName>
        <shortName evidence="1">EF-P</shortName>
    </recommendedName>
</protein>
<evidence type="ECO:0000255" key="1">
    <source>
        <dbReference type="HAMAP-Rule" id="MF_00141"/>
    </source>
</evidence>
<organism>
    <name type="scientific">Nostoc punctiforme (strain ATCC 29133 / PCC 73102)</name>
    <dbReference type="NCBI Taxonomy" id="63737"/>
    <lineage>
        <taxon>Bacteria</taxon>
        <taxon>Bacillati</taxon>
        <taxon>Cyanobacteriota</taxon>
        <taxon>Cyanophyceae</taxon>
        <taxon>Nostocales</taxon>
        <taxon>Nostocaceae</taxon>
        <taxon>Nostoc</taxon>
    </lineage>
</organism>
<sequence>MISSNDFRPGVSIVLDGSVWRVLEFLHVKPGKGSAFVRTKLKNVQSGSVMEKTFRAGETVPQATLEKSTMQHTYKEGDEFVFMDMETYEEGRLTRTQIGDRVKYLKEGMEAEVIKWGDQVLGVELPKSVVLEIVQTDPGLKGDTATGGSKPATLETGAIVMVPLFISQGERIKVDTQEDKYISRE</sequence>
<gene>
    <name evidence="1" type="primary">efp</name>
    <name type="ordered locus">Npun_R0440</name>
</gene>
<name>EFP_NOSP7</name>
<keyword id="KW-0963">Cytoplasm</keyword>
<keyword id="KW-0251">Elongation factor</keyword>
<keyword id="KW-0648">Protein biosynthesis</keyword>
<keyword id="KW-1185">Reference proteome</keyword>